<dbReference type="EC" id="2.4.-.-" evidence="5"/>
<dbReference type="EMBL" id="DP000010">
    <property type="protein sequence ID" value="ABA94391.1"/>
    <property type="molecule type" value="Genomic_DNA"/>
</dbReference>
<dbReference type="EMBL" id="AP008217">
    <property type="protein sequence ID" value="BAF28488.1"/>
    <property type="molecule type" value="Genomic_DNA"/>
</dbReference>
<dbReference type="EMBL" id="AP014967">
    <property type="protein sequence ID" value="BAT14537.1"/>
    <property type="molecule type" value="Genomic_DNA"/>
</dbReference>
<dbReference type="EMBL" id="CM000148">
    <property type="protein sequence ID" value="EAZ18792.1"/>
    <property type="molecule type" value="Genomic_DNA"/>
</dbReference>
<dbReference type="EMBL" id="AK101277">
    <property type="protein sequence ID" value="BAG94988.1"/>
    <property type="molecule type" value="mRNA"/>
</dbReference>
<dbReference type="RefSeq" id="XP_015615272.1">
    <property type="nucleotide sequence ID" value="XM_015759786.1"/>
</dbReference>
<dbReference type="FunCoup" id="Q2R2B1">
    <property type="interactions" value="945"/>
</dbReference>
<dbReference type="STRING" id="39947.Q2R2B1"/>
<dbReference type="CAZy" id="GT29">
    <property type="family name" value="Glycosyltransferase Family 29"/>
</dbReference>
<dbReference type="GlyCosmos" id="Q2R2B1">
    <property type="glycosylation" value="4 sites, No reported glycans"/>
</dbReference>
<dbReference type="PaxDb" id="39947-Q2R2B1"/>
<dbReference type="EnsemblPlants" id="Os11t0572400-01">
    <property type="protein sequence ID" value="Os11t0572400-01"/>
    <property type="gene ID" value="Os11g0572400"/>
</dbReference>
<dbReference type="Gramene" id="Os11t0572400-01">
    <property type="protein sequence ID" value="Os11t0572400-01"/>
    <property type="gene ID" value="Os11g0572400"/>
</dbReference>
<dbReference type="KEGG" id="dosa:Os11g0572400"/>
<dbReference type="eggNOG" id="KOG2692">
    <property type="taxonomic scope" value="Eukaryota"/>
</dbReference>
<dbReference type="HOGENOM" id="CLU_039790_0_0_1"/>
<dbReference type="InParanoid" id="Q2R2B1"/>
<dbReference type="OMA" id="YSYDVCE"/>
<dbReference type="OrthoDB" id="10264956at2759"/>
<dbReference type="Proteomes" id="UP000000763">
    <property type="component" value="Chromosome 11"/>
</dbReference>
<dbReference type="Proteomes" id="UP000007752">
    <property type="component" value="Chromosome 11"/>
</dbReference>
<dbReference type="Proteomes" id="UP000059680">
    <property type="component" value="Chromosome 11"/>
</dbReference>
<dbReference type="GO" id="GO:0000139">
    <property type="term" value="C:Golgi membrane"/>
    <property type="evidence" value="ECO:0007669"/>
    <property type="project" value="UniProtKB-SubCell"/>
</dbReference>
<dbReference type="GO" id="GO:0000138">
    <property type="term" value="C:Golgi trans cisterna"/>
    <property type="evidence" value="ECO:0007669"/>
    <property type="project" value="EnsemblPlants"/>
</dbReference>
<dbReference type="GO" id="GO:0008373">
    <property type="term" value="F:sialyltransferase activity"/>
    <property type="evidence" value="ECO:0007669"/>
    <property type="project" value="InterPro"/>
</dbReference>
<dbReference type="GO" id="GO:0009846">
    <property type="term" value="P:pollen germination"/>
    <property type="evidence" value="ECO:0007669"/>
    <property type="project" value="EnsemblPlants"/>
</dbReference>
<dbReference type="GO" id="GO:0009860">
    <property type="term" value="P:pollen tube growth"/>
    <property type="evidence" value="ECO:0007669"/>
    <property type="project" value="EnsemblPlants"/>
</dbReference>
<dbReference type="GO" id="GO:0006486">
    <property type="term" value="P:protein glycosylation"/>
    <property type="evidence" value="ECO:0007669"/>
    <property type="project" value="InterPro"/>
</dbReference>
<dbReference type="CDD" id="cd19952">
    <property type="entry name" value="GT29"/>
    <property type="match status" value="1"/>
</dbReference>
<dbReference type="Gene3D" id="3.90.1480.20">
    <property type="entry name" value="Glycosyl transferase family 29"/>
    <property type="match status" value="2"/>
</dbReference>
<dbReference type="InterPro" id="IPR001675">
    <property type="entry name" value="Glyco_trans_29"/>
</dbReference>
<dbReference type="InterPro" id="IPR038578">
    <property type="entry name" value="GT29-like_sf"/>
</dbReference>
<dbReference type="InterPro" id="IPR044782">
    <property type="entry name" value="SIA1/STLP5"/>
</dbReference>
<dbReference type="PANTHER" id="PTHR47486">
    <property type="entry name" value="SIALYLTRANSFERASE-LIKE PROTEIN 1"/>
    <property type="match status" value="1"/>
</dbReference>
<dbReference type="PANTHER" id="PTHR47486:SF1">
    <property type="entry name" value="SIALYLTRANSFERASE-LIKE PROTEIN 1"/>
    <property type="match status" value="1"/>
</dbReference>
<dbReference type="Pfam" id="PF00777">
    <property type="entry name" value="Glyco_transf_29"/>
    <property type="match status" value="1"/>
</dbReference>
<accession>Q2R2B1</accession>
<accession>A0A0P0Y3P1</accession>
<sequence length="480" mass="54356">MARAPPPLSSLPPPPRRPTVVLLLGLALAFCLAVLSIQSSFFTAPRLASRLDLDSDEVRALSGFQSRVQQCVARRGLGLTADIIDHCKLVLRFPKGTNSTWYNTQFKYFEPLEYNYDVCETILLWEQYRNMTTVLTREYLDVRPDGWLDYAAKRIAQLGADKCYNRTLCEELLSVLLPAKPPFHPRQFATCAVVGNSGDLLKTEFGQEIDAHDAVFRDNEAPVNKKYAKYVGLKRDFRLVVRGAARNMAPILKGSSDEVLIIKSLTHKEINAVIKELPNPVYLFQGIVLRRGAKGTGMKSIELALSMCDIIDMYGFTVDPNYTEWTRYFSPPRKGHNPLQGRAYYQLLECLGVIRIHSPMRAKRVEDWSDIPSREEIRTAHAAAFRLKRHETGQSDQMGPFSNCKVWGTVDPDYGPVSGTPDMSETRKSSNYKKWEVLPFDSLRMEAQEHHVQMGGVSLYKMDGNKLDDLVCVRHERSSS</sequence>
<feature type="chain" id="PRO_0000434319" description="Sialyltransferase-like protein 5">
    <location>
        <begin position="1"/>
        <end position="480"/>
    </location>
</feature>
<feature type="topological domain" description="Cytoplasmic" evidence="5">
    <location>
        <begin position="1"/>
        <end position="17"/>
    </location>
</feature>
<feature type="transmembrane region" description="Signal-anchor for type II membrane protein" evidence="3">
    <location>
        <begin position="18"/>
        <end position="38"/>
    </location>
</feature>
<feature type="topological domain" description="Lumenal" evidence="5">
    <location>
        <begin position="39"/>
        <end position="480"/>
    </location>
</feature>
<feature type="glycosylation site" description="N-linked (GlcNAc...) asparagine" evidence="4">
    <location>
        <position position="98"/>
    </location>
</feature>
<feature type="glycosylation site" description="N-linked (GlcNAc...) asparagine" evidence="4">
    <location>
        <position position="130"/>
    </location>
</feature>
<feature type="glycosylation site" description="N-linked (GlcNAc...) asparagine" evidence="4">
    <location>
        <position position="165"/>
    </location>
</feature>
<feature type="glycosylation site" description="N-linked (GlcNAc...) asparagine" evidence="4">
    <location>
        <position position="321"/>
    </location>
</feature>
<organism>
    <name type="scientific">Oryza sativa subsp. japonica</name>
    <name type="common">Rice</name>
    <dbReference type="NCBI Taxonomy" id="39947"/>
    <lineage>
        <taxon>Eukaryota</taxon>
        <taxon>Viridiplantae</taxon>
        <taxon>Streptophyta</taxon>
        <taxon>Embryophyta</taxon>
        <taxon>Tracheophyta</taxon>
        <taxon>Spermatophyta</taxon>
        <taxon>Magnoliopsida</taxon>
        <taxon>Liliopsida</taxon>
        <taxon>Poales</taxon>
        <taxon>Poaceae</taxon>
        <taxon>BOP clade</taxon>
        <taxon>Oryzoideae</taxon>
        <taxon>Oryzeae</taxon>
        <taxon>Oryzinae</taxon>
        <taxon>Oryza</taxon>
        <taxon>Oryza sativa</taxon>
    </lineage>
</organism>
<keyword id="KW-0325">Glycoprotein</keyword>
<keyword id="KW-0328">Glycosyltransferase</keyword>
<keyword id="KW-0333">Golgi apparatus</keyword>
<keyword id="KW-0472">Membrane</keyword>
<keyword id="KW-1185">Reference proteome</keyword>
<keyword id="KW-0735">Signal-anchor</keyword>
<keyword id="KW-0808">Transferase</keyword>
<keyword id="KW-0812">Transmembrane</keyword>
<keyword id="KW-1133">Transmembrane helix</keyword>
<comment type="function">
    <text evidence="1">May possess sialyltransferase-like activity in vitro.</text>
</comment>
<comment type="subcellular location">
    <subcellularLocation>
        <location evidence="2">Golgi apparatus membrane</location>
        <topology evidence="5">Single-pass type II membrane protein</topology>
    </subcellularLocation>
</comment>
<comment type="similarity">
    <text evidence="5">Belongs to the glycosyltransferase 29 family.</text>
</comment>
<protein>
    <recommendedName>
        <fullName evidence="5">Sialyltransferase-like protein 5</fullName>
        <shortName evidence="5">OsSTLP5</shortName>
        <ecNumber evidence="5">2.4.-.-</ecNumber>
    </recommendedName>
</protein>
<proteinExistence type="evidence at transcript level"/>
<evidence type="ECO:0000250" key="1">
    <source>
        <dbReference type="UniProtKB" id="Q94DD4"/>
    </source>
</evidence>
<evidence type="ECO:0000250" key="2">
    <source>
        <dbReference type="UniProtKB" id="Q9SGD2"/>
    </source>
</evidence>
<evidence type="ECO:0000255" key="3"/>
<evidence type="ECO:0000255" key="4">
    <source>
        <dbReference type="PROSITE-ProRule" id="PRU00498"/>
    </source>
</evidence>
<evidence type="ECO:0000305" key="5"/>
<evidence type="ECO:0000312" key="6">
    <source>
        <dbReference type="EMBL" id="ABA94391.1"/>
    </source>
</evidence>
<evidence type="ECO:0000312" key="7">
    <source>
        <dbReference type="EMBL" id="BAF28488.1"/>
    </source>
</evidence>
<evidence type="ECO:0000312" key="8">
    <source>
        <dbReference type="EMBL" id="EAZ18792.1"/>
    </source>
</evidence>
<gene>
    <name evidence="5" type="primary">STLP5</name>
    <name evidence="7" type="ordered locus">Os11g0572400</name>
    <name evidence="6" type="ordered locus">LOC_Os11g36420</name>
    <name evidence="8" type="ORF">OsJ_34319</name>
</gene>
<name>STLP5_ORYSJ</name>
<reference key="1">
    <citation type="journal article" date="2005" name="BMC Biol.">
        <title>The sequence of rice chromosomes 11 and 12, rich in disease resistance genes and recent gene duplications.</title>
        <authorList>
            <consortium name="The rice chromosomes 11 and 12 sequencing consortia"/>
        </authorList>
    </citation>
    <scope>NUCLEOTIDE SEQUENCE [LARGE SCALE GENOMIC DNA]</scope>
    <source>
        <strain>cv. Nipponbare</strain>
    </source>
</reference>
<reference key="2">
    <citation type="journal article" date="2005" name="Nature">
        <title>The map-based sequence of the rice genome.</title>
        <authorList>
            <consortium name="International rice genome sequencing project (IRGSP)"/>
        </authorList>
    </citation>
    <scope>NUCLEOTIDE SEQUENCE [LARGE SCALE GENOMIC DNA]</scope>
    <source>
        <strain>cv. Nipponbare</strain>
    </source>
</reference>
<reference key="3">
    <citation type="journal article" date="2008" name="Nucleic Acids Res.">
        <title>The rice annotation project database (RAP-DB): 2008 update.</title>
        <authorList>
            <consortium name="The rice annotation project (RAP)"/>
        </authorList>
    </citation>
    <scope>GENOME REANNOTATION</scope>
    <source>
        <strain>cv. Nipponbare</strain>
    </source>
</reference>
<reference key="4">
    <citation type="journal article" date="2013" name="Rice">
        <title>Improvement of the Oryza sativa Nipponbare reference genome using next generation sequence and optical map data.</title>
        <authorList>
            <person name="Kawahara Y."/>
            <person name="de la Bastide M."/>
            <person name="Hamilton J.P."/>
            <person name="Kanamori H."/>
            <person name="McCombie W.R."/>
            <person name="Ouyang S."/>
            <person name="Schwartz D.C."/>
            <person name="Tanaka T."/>
            <person name="Wu J."/>
            <person name="Zhou S."/>
            <person name="Childs K.L."/>
            <person name="Davidson R.M."/>
            <person name="Lin H."/>
            <person name="Quesada-Ocampo L."/>
            <person name="Vaillancourt B."/>
            <person name="Sakai H."/>
            <person name="Lee S.S."/>
            <person name="Kim J."/>
            <person name="Numa H."/>
            <person name="Itoh T."/>
            <person name="Buell C.R."/>
            <person name="Matsumoto T."/>
        </authorList>
    </citation>
    <scope>GENOME REANNOTATION</scope>
    <source>
        <strain>cv. Nipponbare</strain>
    </source>
</reference>
<reference key="5">
    <citation type="journal article" date="2005" name="PLoS Biol.">
        <title>The genomes of Oryza sativa: a history of duplications.</title>
        <authorList>
            <person name="Yu J."/>
            <person name="Wang J."/>
            <person name="Lin W."/>
            <person name="Li S."/>
            <person name="Li H."/>
            <person name="Zhou J."/>
            <person name="Ni P."/>
            <person name="Dong W."/>
            <person name="Hu S."/>
            <person name="Zeng C."/>
            <person name="Zhang J."/>
            <person name="Zhang Y."/>
            <person name="Li R."/>
            <person name="Xu Z."/>
            <person name="Li S."/>
            <person name="Li X."/>
            <person name="Zheng H."/>
            <person name="Cong L."/>
            <person name="Lin L."/>
            <person name="Yin J."/>
            <person name="Geng J."/>
            <person name="Li G."/>
            <person name="Shi J."/>
            <person name="Liu J."/>
            <person name="Lv H."/>
            <person name="Li J."/>
            <person name="Wang J."/>
            <person name="Deng Y."/>
            <person name="Ran L."/>
            <person name="Shi X."/>
            <person name="Wang X."/>
            <person name="Wu Q."/>
            <person name="Li C."/>
            <person name="Ren X."/>
            <person name="Wang J."/>
            <person name="Wang X."/>
            <person name="Li D."/>
            <person name="Liu D."/>
            <person name="Zhang X."/>
            <person name="Ji Z."/>
            <person name="Zhao W."/>
            <person name="Sun Y."/>
            <person name="Zhang Z."/>
            <person name="Bao J."/>
            <person name="Han Y."/>
            <person name="Dong L."/>
            <person name="Ji J."/>
            <person name="Chen P."/>
            <person name="Wu S."/>
            <person name="Liu J."/>
            <person name="Xiao Y."/>
            <person name="Bu D."/>
            <person name="Tan J."/>
            <person name="Yang L."/>
            <person name="Ye C."/>
            <person name="Zhang J."/>
            <person name="Xu J."/>
            <person name="Zhou Y."/>
            <person name="Yu Y."/>
            <person name="Zhang B."/>
            <person name="Zhuang S."/>
            <person name="Wei H."/>
            <person name="Liu B."/>
            <person name="Lei M."/>
            <person name="Yu H."/>
            <person name="Li Y."/>
            <person name="Xu H."/>
            <person name="Wei S."/>
            <person name="He X."/>
            <person name="Fang L."/>
            <person name="Zhang Z."/>
            <person name="Zhang Y."/>
            <person name="Huang X."/>
            <person name="Su Z."/>
            <person name="Tong W."/>
            <person name="Li J."/>
            <person name="Tong Z."/>
            <person name="Li S."/>
            <person name="Ye J."/>
            <person name="Wang L."/>
            <person name="Fang L."/>
            <person name="Lei T."/>
            <person name="Chen C.-S."/>
            <person name="Chen H.-C."/>
            <person name="Xu Z."/>
            <person name="Li H."/>
            <person name="Huang H."/>
            <person name="Zhang F."/>
            <person name="Xu H."/>
            <person name="Li N."/>
            <person name="Zhao C."/>
            <person name="Li S."/>
            <person name="Dong L."/>
            <person name="Huang Y."/>
            <person name="Li L."/>
            <person name="Xi Y."/>
            <person name="Qi Q."/>
            <person name="Li W."/>
            <person name="Zhang B."/>
            <person name="Hu W."/>
            <person name="Zhang Y."/>
            <person name="Tian X."/>
            <person name="Jiao Y."/>
            <person name="Liang X."/>
            <person name="Jin J."/>
            <person name="Gao L."/>
            <person name="Zheng W."/>
            <person name="Hao B."/>
            <person name="Liu S.-M."/>
            <person name="Wang W."/>
            <person name="Yuan L."/>
            <person name="Cao M."/>
            <person name="McDermott J."/>
            <person name="Samudrala R."/>
            <person name="Wang J."/>
            <person name="Wong G.K.-S."/>
            <person name="Yang H."/>
        </authorList>
    </citation>
    <scope>NUCLEOTIDE SEQUENCE [LARGE SCALE GENOMIC DNA]</scope>
    <source>
        <strain>cv. Nipponbare</strain>
    </source>
</reference>
<reference key="6">
    <citation type="journal article" date="2003" name="Science">
        <title>Collection, mapping, and annotation of over 28,000 cDNA clones from japonica rice.</title>
        <authorList>
            <consortium name="The rice full-length cDNA consortium"/>
        </authorList>
    </citation>
    <scope>NUCLEOTIDE SEQUENCE [LARGE SCALE MRNA]</scope>
    <source>
        <strain>cv. Nipponbare</strain>
    </source>
</reference>